<name>RS15_CLOBH</name>
<dbReference type="EMBL" id="AM412317">
    <property type="protein sequence ID" value="CAL83960.1"/>
    <property type="molecule type" value="Genomic_DNA"/>
</dbReference>
<dbReference type="EMBL" id="CP000727">
    <property type="protein sequence ID" value="ABS37314.1"/>
    <property type="status" value="ALT_INIT"/>
    <property type="molecule type" value="Genomic_DNA"/>
</dbReference>
<dbReference type="RefSeq" id="WP_003388351.1">
    <property type="nucleotide sequence ID" value="NC_009698.1"/>
</dbReference>
<dbReference type="RefSeq" id="YP_001254909.1">
    <property type="nucleotide sequence ID" value="NC_009495.1"/>
</dbReference>
<dbReference type="RefSeq" id="YP_001388104.1">
    <property type="nucleotide sequence ID" value="NC_009698.1"/>
</dbReference>
<dbReference type="SMR" id="A5I4I8"/>
<dbReference type="GeneID" id="92939166"/>
<dbReference type="KEGG" id="cbh:CLC_2260"/>
<dbReference type="KEGG" id="cbo:CBO2414"/>
<dbReference type="PATRIC" id="fig|413999.7.peg.2390"/>
<dbReference type="HOGENOM" id="CLU_148518_0_1_9"/>
<dbReference type="PRO" id="PR:A5I4I8"/>
<dbReference type="Proteomes" id="UP000001986">
    <property type="component" value="Chromosome"/>
</dbReference>
<dbReference type="GO" id="GO:0022627">
    <property type="term" value="C:cytosolic small ribosomal subunit"/>
    <property type="evidence" value="ECO:0000318"/>
    <property type="project" value="GO_Central"/>
</dbReference>
<dbReference type="GO" id="GO:0019843">
    <property type="term" value="F:rRNA binding"/>
    <property type="evidence" value="ECO:0007669"/>
    <property type="project" value="UniProtKB-UniRule"/>
</dbReference>
<dbReference type="GO" id="GO:0003735">
    <property type="term" value="F:structural constituent of ribosome"/>
    <property type="evidence" value="ECO:0007669"/>
    <property type="project" value="InterPro"/>
</dbReference>
<dbReference type="GO" id="GO:0006412">
    <property type="term" value="P:translation"/>
    <property type="evidence" value="ECO:0007669"/>
    <property type="project" value="UniProtKB-UniRule"/>
</dbReference>
<dbReference type="CDD" id="cd00353">
    <property type="entry name" value="Ribosomal_S15p_S13e"/>
    <property type="match status" value="1"/>
</dbReference>
<dbReference type="FunFam" id="1.10.287.10:FF:000002">
    <property type="entry name" value="30S ribosomal protein S15"/>
    <property type="match status" value="1"/>
</dbReference>
<dbReference type="Gene3D" id="6.10.250.3130">
    <property type="match status" value="1"/>
</dbReference>
<dbReference type="Gene3D" id="1.10.287.10">
    <property type="entry name" value="S15/NS1, RNA-binding"/>
    <property type="match status" value="1"/>
</dbReference>
<dbReference type="HAMAP" id="MF_01343_B">
    <property type="entry name" value="Ribosomal_uS15_B"/>
    <property type="match status" value="1"/>
</dbReference>
<dbReference type="InterPro" id="IPR000589">
    <property type="entry name" value="Ribosomal_uS15"/>
</dbReference>
<dbReference type="InterPro" id="IPR005290">
    <property type="entry name" value="Ribosomal_uS15_bac-type"/>
</dbReference>
<dbReference type="InterPro" id="IPR009068">
    <property type="entry name" value="uS15_NS1_RNA-bd_sf"/>
</dbReference>
<dbReference type="NCBIfam" id="TIGR00952">
    <property type="entry name" value="S15_bact"/>
    <property type="match status" value="1"/>
</dbReference>
<dbReference type="PANTHER" id="PTHR23321">
    <property type="entry name" value="RIBOSOMAL PROTEIN S15, BACTERIAL AND ORGANELLAR"/>
    <property type="match status" value="1"/>
</dbReference>
<dbReference type="PANTHER" id="PTHR23321:SF26">
    <property type="entry name" value="SMALL RIBOSOMAL SUBUNIT PROTEIN US15M"/>
    <property type="match status" value="1"/>
</dbReference>
<dbReference type="Pfam" id="PF00312">
    <property type="entry name" value="Ribosomal_S15"/>
    <property type="match status" value="1"/>
</dbReference>
<dbReference type="SMART" id="SM01387">
    <property type="entry name" value="Ribosomal_S15"/>
    <property type="match status" value="1"/>
</dbReference>
<dbReference type="SUPFAM" id="SSF47060">
    <property type="entry name" value="S15/NS1 RNA-binding domain"/>
    <property type="match status" value="1"/>
</dbReference>
<dbReference type="PROSITE" id="PS00362">
    <property type="entry name" value="RIBOSOMAL_S15"/>
    <property type="match status" value="1"/>
</dbReference>
<organism>
    <name type="scientific">Clostridium botulinum (strain Hall / ATCC 3502 / NCTC 13319 / Type A)</name>
    <dbReference type="NCBI Taxonomy" id="441771"/>
    <lineage>
        <taxon>Bacteria</taxon>
        <taxon>Bacillati</taxon>
        <taxon>Bacillota</taxon>
        <taxon>Clostridia</taxon>
        <taxon>Eubacteriales</taxon>
        <taxon>Clostridiaceae</taxon>
        <taxon>Clostridium</taxon>
    </lineage>
</organism>
<gene>
    <name evidence="1" type="primary">rpsO</name>
    <name type="ordered locus">CBO2414</name>
    <name type="ordered locus">CLC_2260</name>
</gene>
<protein>
    <recommendedName>
        <fullName evidence="1">Small ribosomal subunit protein uS15</fullName>
    </recommendedName>
    <alternativeName>
        <fullName evidence="3">30S ribosomal protein S15</fullName>
    </alternativeName>
</protein>
<feature type="chain" id="PRO_0000354185" description="Small ribosomal subunit protein uS15">
    <location>
        <begin position="1"/>
        <end position="87"/>
    </location>
</feature>
<feature type="region of interest" description="Disordered" evidence="2">
    <location>
        <begin position="1"/>
        <end position="23"/>
    </location>
</feature>
<feature type="compositionally biased region" description="Basic and acidic residues" evidence="2">
    <location>
        <begin position="1"/>
        <end position="19"/>
    </location>
</feature>
<keyword id="KW-1185">Reference proteome</keyword>
<keyword id="KW-0687">Ribonucleoprotein</keyword>
<keyword id="KW-0689">Ribosomal protein</keyword>
<keyword id="KW-0694">RNA-binding</keyword>
<keyword id="KW-0699">rRNA-binding</keyword>
<sequence>MDKAKKQELMAKHARHEGDTGSPEVQIALLTERINHLNSHLKEHKKDHHSRRGLLMMVGKRRGLLNYLMREDIERYRAIIKELGLRK</sequence>
<comment type="function">
    <text evidence="1">One of the primary rRNA binding proteins, it binds directly to 16S rRNA where it helps nucleate assembly of the platform of the 30S subunit by binding and bridging several RNA helices of the 16S rRNA.</text>
</comment>
<comment type="function">
    <text evidence="1">Forms an intersubunit bridge (bridge B4) with the 23S rRNA of the 50S subunit in the ribosome.</text>
</comment>
<comment type="subunit">
    <text evidence="1">Part of the 30S ribosomal subunit. Forms a bridge to the 50S subunit in the 70S ribosome, contacting the 23S rRNA.</text>
</comment>
<comment type="similarity">
    <text evidence="1">Belongs to the universal ribosomal protein uS15 family.</text>
</comment>
<comment type="sequence caution" evidence="3">
    <conflict type="erroneous initiation">
        <sequence resource="EMBL-CDS" id="ABS37314"/>
    </conflict>
</comment>
<proteinExistence type="inferred from homology"/>
<reference key="1">
    <citation type="journal article" date="2007" name="Genome Res.">
        <title>Genome sequence of a proteolytic (Group I) Clostridium botulinum strain Hall A and comparative analysis of the clostridial genomes.</title>
        <authorList>
            <person name="Sebaihia M."/>
            <person name="Peck M.W."/>
            <person name="Minton N.P."/>
            <person name="Thomson N.R."/>
            <person name="Holden M.T.G."/>
            <person name="Mitchell W.J."/>
            <person name="Carter A.T."/>
            <person name="Bentley S.D."/>
            <person name="Mason D.R."/>
            <person name="Crossman L."/>
            <person name="Paul C.J."/>
            <person name="Ivens A."/>
            <person name="Wells-Bennik M.H.J."/>
            <person name="Davis I.J."/>
            <person name="Cerdeno-Tarraga A.M."/>
            <person name="Churcher C."/>
            <person name="Quail M.A."/>
            <person name="Chillingworth T."/>
            <person name="Feltwell T."/>
            <person name="Fraser A."/>
            <person name="Goodhead I."/>
            <person name="Hance Z."/>
            <person name="Jagels K."/>
            <person name="Larke N."/>
            <person name="Maddison M."/>
            <person name="Moule S."/>
            <person name="Mungall K."/>
            <person name="Norbertczak H."/>
            <person name="Rabbinowitsch E."/>
            <person name="Sanders M."/>
            <person name="Simmonds M."/>
            <person name="White B."/>
            <person name="Whithead S."/>
            <person name="Parkhill J."/>
        </authorList>
    </citation>
    <scope>NUCLEOTIDE SEQUENCE [LARGE SCALE GENOMIC DNA]</scope>
    <source>
        <strain>Hall / ATCC 3502 / NCTC 13319 / Type A</strain>
    </source>
</reference>
<reference key="2">
    <citation type="journal article" date="2007" name="PLoS ONE">
        <title>Analysis of the neurotoxin complex genes in Clostridium botulinum A1-A4 and B1 strains: BoNT/A3, /Ba4 and /B1 clusters are located within plasmids.</title>
        <authorList>
            <person name="Smith T.J."/>
            <person name="Hill K.K."/>
            <person name="Foley B.T."/>
            <person name="Detter J.C."/>
            <person name="Munk A.C."/>
            <person name="Bruce D.C."/>
            <person name="Doggett N.A."/>
            <person name="Smith L.A."/>
            <person name="Marks J.D."/>
            <person name="Xie G."/>
            <person name="Brettin T.S."/>
        </authorList>
    </citation>
    <scope>NUCLEOTIDE SEQUENCE [LARGE SCALE GENOMIC DNA]</scope>
    <source>
        <strain>Hall / ATCC 3502 / NCTC 13319 / Type A</strain>
    </source>
</reference>
<accession>A5I4I8</accession>
<accession>A7G5N9</accession>
<evidence type="ECO:0000255" key="1">
    <source>
        <dbReference type="HAMAP-Rule" id="MF_01343"/>
    </source>
</evidence>
<evidence type="ECO:0000256" key="2">
    <source>
        <dbReference type="SAM" id="MobiDB-lite"/>
    </source>
</evidence>
<evidence type="ECO:0000305" key="3"/>